<reference key="1">
    <citation type="journal article" date="2011" name="J. Bacteriol.">
        <title>Comparative genomics of 28 Salmonella enterica isolates: evidence for CRISPR-mediated adaptive sublineage evolution.</title>
        <authorList>
            <person name="Fricke W.F."/>
            <person name="Mammel M.K."/>
            <person name="McDermott P.F."/>
            <person name="Tartera C."/>
            <person name="White D.G."/>
            <person name="Leclerc J.E."/>
            <person name="Ravel J."/>
            <person name="Cebula T.A."/>
        </authorList>
    </citation>
    <scope>NUCLEOTIDE SEQUENCE [LARGE SCALE GENOMIC DNA]</scope>
    <source>
        <strain>CVM19633</strain>
    </source>
</reference>
<gene>
    <name evidence="1" type="primary">tilS</name>
    <name type="ordered locus">SeSA_A0263</name>
</gene>
<feature type="chain" id="PRO_1000164332" description="tRNA(Ile)-lysidine synthase">
    <location>
        <begin position="1"/>
        <end position="430"/>
    </location>
</feature>
<feature type="binding site" evidence="1">
    <location>
        <begin position="21"/>
        <end position="26"/>
    </location>
    <ligand>
        <name>ATP</name>
        <dbReference type="ChEBI" id="CHEBI:30616"/>
    </ligand>
</feature>
<sequence>MTTLTLNTSLLSSRRILAAFSGGLDSTVLLHQLVLWRERHPDVTLRAIHIHHGLSPHADSWVRHCETVCERWQVPLVVKRVTLADNGLGIEAHAREARYRAFAQTLLPGEVLATAQHLDDQCETFLLALKRGSGPAGLSAMGERSPFAGTLLLRPLLRETRKTLEQWAVHHGLCWIEDESNQDDAYDRNFLRLRALPLLQQRWPHFPAAVARSATLCAEQERLLDELLASDLTDCITTEGTLRLSPLMSMSDVRRAAILRRWLAMRNAPMPSRDALERIWQEVALARDDASPCLRFGDHEIRRYQSQLWWIKSVAGQHETTVAWPVWQTPLALPAGLGTVQLVPGGELRRPREEESVSIRFKAPGLLHIVGRHGGRKLKKIWQEQGIPPWRRDTTPLLFYGETLIAAAGVFVTREGAAEDKEGVSLVWHA</sequence>
<dbReference type="EC" id="6.3.4.19" evidence="1"/>
<dbReference type="EMBL" id="CP001127">
    <property type="protein sequence ID" value="ACF92900.1"/>
    <property type="molecule type" value="Genomic_DNA"/>
</dbReference>
<dbReference type="RefSeq" id="WP_000210069.1">
    <property type="nucleotide sequence ID" value="NC_011094.1"/>
</dbReference>
<dbReference type="SMR" id="B4TYE9"/>
<dbReference type="KEGG" id="sew:SeSA_A0263"/>
<dbReference type="HOGENOM" id="CLU_018869_2_0_6"/>
<dbReference type="Proteomes" id="UP000001865">
    <property type="component" value="Chromosome"/>
</dbReference>
<dbReference type="GO" id="GO:0005737">
    <property type="term" value="C:cytoplasm"/>
    <property type="evidence" value="ECO:0007669"/>
    <property type="project" value="UniProtKB-SubCell"/>
</dbReference>
<dbReference type="GO" id="GO:0005524">
    <property type="term" value="F:ATP binding"/>
    <property type="evidence" value="ECO:0007669"/>
    <property type="project" value="UniProtKB-UniRule"/>
</dbReference>
<dbReference type="GO" id="GO:0032267">
    <property type="term" value="F:tRNA(Ile)-lysidine synthase activity"/>
    <property type="evidence" value="ECO:0007669"/>
    <property type="project" value="UniProtKB-EC"/>
</dbReference>
<dbReference type="GO" id="GO:0006400">
    <property type="term" value="P:tRNA modification"/>
    <property type="evidence" value="ECO:0007669"/>
    <property type="project" value="UniProtKB-UniRule"/>
</dbReference>
<dbReference type="CDD" id="cd01992">
    <property type="entry name" value="TilS_N"/>
    <property type="match status" value="1"/>
</dbReference>
<dbReference type="FunFam" id="3.40.50.620:FF:000173">
    <property type="entry name" value="tRNA(Ile)-lysidine synthase"/>
    <property type="match status" value="1"/>
</dbReference>
<dbReference type="Gene3D" id="1.20.59.20">
    <property type="match status" value="1"/>
</dbReference>
<dbReference type="Gene3D" id="3.40.50.620">
    <property type="entry name" value="HUPs"/>
    <property type="match status" value="1"/>
</dbReference>
<dbReference type="HAMAP" id="MF_01161">
    <property type="entry name" value="tRNA_Ile_lys_synt"/>
    <property type="match status" value="1"/>
</dbReference>
<dbReference type="InterPro" id="IPR012796">
    <property type="entry name" value="Lysidine-tRNA-synth_C"/>
</dbReference>
<dbReference type="InterPro" id="IPR014729">
    <property type="entry name" value="Rossmann-like_a/b/a_fold"/>
</dbReference>
<dbReference type="InterPro" id="IPR011063">
    <property type="entry name" value="TilS/TtcA_N"/>
</dbReference>
<dbReference type="InterPro" id="IPR012094">
    <property type="entry name" value="tRNA_Ile_lys_synt"/>
</dbReference>
<dbReference type="InterPro" id="IPR012795">
    <property type="entry name" value="tRNA_Ile_lys_synt_N"/>
</dbReference>
<dbReference type="InterPro" id="IPR015262">
    <property type="entry name" value="tRNA_Ile_lys_synt_subst-bd"/>
</dbReference>
<dbReference type="NCBIfam" id="TIGR02433">
    <property type="entry name" value="lysidine_TilS_C"/>
    <property type="match status" value="1"/>
</dbReference>
<dbReference type="NCBIfam" id="TIGR02432">
    <property type="entry name" value="lysidine_TilS_N"/>
    <property type="match status" value="1"/>
</dbReference>
<dbReference type="NCBIfam" id="NF007942">
    <property type="entry name" value="PRK10660.1"/>
    <property type="match status" value="1"/>
</dbReference>
<dbReference type="PANTHER" id="PTHR43033">
    <property type="entry name" value="TRNA(ILE)-LYSIDINE SYNTHASE-RELATED"/>
    <property type="match status" value="1"/>
</dbReference>
<dbReference type="PANTHER" id="PTHR43033:SF1">
    <property type="entry name" value="TRNA(ILE)-LYSIDINE SYNTHASE-RELATED"/>
    <property type="match status" value="1"/>
</dbReference>
<dbReference type="Pfam" id="PF01171">
    <property type="entry name" value="ATP_bind_3"/>
    <property type="match status" value="1"/>
</dbReference>
<dbReference type="Pfam" id="PF09179">
    <property type="entry name" value="TilS"/>
    <property type="match status" value="1"/>
</dbReference>
<dbReference type="Pfam" id="PF11734">
    <property type="entry name" value="TilS_C"/>
    <property type="match status" value="1"/>
</dbReference>
<dbReference type="SMART" id="SM00977">
    <property type="entry name" value="TilS_C"/>
    <property type="match status" value="1"/>
</dbReference>
<dbReference type="SUPFAM" id="SSF52402">
    <property type="entry name" value="Adenine nucleotide alpha hydrolases-like"/>
    <property type="match status" value="1"/>
</dbReference>
<dbReference type="SUPFAM" id="SSF82829">
    <property type="entry name" value="MesJ substrate recognition domain-like"/>
    <property type="match status" value="1"/>
</dbReference>
<dbReference type="SUPFAM" id="SSF56037">
    <property type="entry name" value="PheT/TilS domain"/>
    <property type="match status" value="1"/>
</dbReference>
<proteinExistence type="inferred from homology"/>
<protein>
    <recommendedName>
        <fullName evidence="1">tRNA(Ile)-lysidine synthase</fullName>
        <ecNumber evidence="1">6.3.4.19</ecNumber>
    </recommendedName>
    <alternativeName>
        <fullName evidence="1">tRNA(Ile)-2-lysyl-cytidine synthase</fullName>
    </alternativeName>
    <alternativeName>
        <fullName evidence="1">tRNA(Ile)-lysidine synthetase</fullName>
    </alternativeName>
</protein>
<evidence type="ECO:0000255" key="1">
    <source>
        <dbReference type="HAMAP-Rule" id="MF_01161"/>
    </source>
</evidence>
<accession>B4TYE9</accession>
<keyword id="KW-0067">ATP-binding</keyword>
<keyword id="KW-0963">Cytoplasm</keyword>
<keyword id="KW-0436">Ligase</keyword>
<keyword id="KW-0547">Nucleotide-binding</keyword>
<keyword id="KW-0819">tRNA processing</keyword>
<name>TILS_SALSV</name>
<organism>
    <name type="scientific">Salmonella schwarzengrund (strain CVM19633)</name>
    <dbReference type="NCBI Taxonomy" id="439843"/>
    <lineage>
        <taxon>Bacteria</taxon>
        <taxon>Pseudomonadati</taxon>
        <taxon>Pseudomonadota</taxon>
        <taxon>Gammaproteobacteria</taxon>
        <taxon>Enterobacterales</taxon>
        <taxon>Enterobacteriaceae</taxon>
        <taxon>Salmonella</taxon>
    </lineage>
</organism>
<comment type="function">
    <text evidence="1">Ligates lysine onto the cytidine present at position 34 of the AUA codon-specific tRNA(Ile) that contains the anticodon CAU, in an ATP-dependent manner. Cytidine is converted to lysidine, thus changing the amino acid specificity of the tRNA from methionine to isoleucine.</text>
</comment>
<comment type="catalytic activity">
    <reaction evidence="1">
        <text>cytidine(34) in tRNA(Ile2) + L-lysine + ATP = lysidine(34) in tRNA(Ile2) + AMP + diphosphate + H(+)</text>
        <dbReference type="Rhea" id="RHEA:43744"/>
        <dbReference type="Rhea" id="RHEA-COMP:10625"/>
        <dbReference type="Rhea" id="RHEA-COMP:10670"/>
        <dbReference type="ChEBI" id="CHEBI:15378"/>
        <dbReference type="ChEBI" id="CHEBI:30616"/>
        <dbReference type="ChEBI" id="CHEBI:32551"/>
        <dbReference type="ChEBI" id="CHEBI:33019"/>
        <dbReference type="ChEBI" id="CHEBI:82748"/>
        <dbReference type="ChEBI" id="CHEBI:83665"/>
        <dbReference type="ChEBI" id="CHEBI:456215"/>
        <dbReference type="EC" id="6.3.4.19"/>
    </reaction>
</comment>
<comment type="subcellular location">
    <subcellularLocation>
        <location evidence="1">Cytoplasm</location>
    </subcellularLocation>
</comment>
<comment type="domain">
    <text>The N-terminal region contains the highly conserved SGGXDS motif, predicted to be a P-loop motif involved in ATP binding.</text>
</comment>
<comment type="similarity">
    <text evidence="1">Belongs to the tRNA(Ile)-lysidine synthase family.</text>
</comment>